<protein>
    <recommendedName>
        <fullName evidence="1">Large ribosomal subunit protein uL13</fullName>
    </recommendedName>
    <alternativeName>
        <fullName evidence="2">50S ribosomal protein L13</fullName>
    </alternativeName>
</protein>
<keyword id="KW-0687">Ribonucleoprotein</keyword>
<keyword id="KW-0689">Ribosomal protein</keyword>
<evidence type="ECO:0000255" key="1">
    <source>
        <dbReference type="HAMAP-Rule" id="MF_01366"/>
    </source>
</evidence>
<evidence type="ECO:0000305" key="2"/>
<sequence length="142" mass="16110">MKTFSAKPHEVKRDWYVIDATDKVLGRVASEVARRLRGKHKPEFTPHVDTGDYIIIVNAAKLRVTGTKETDKKYYRHSGYPGGIYETTFGKMQQRFPGRALEKAVKGMLPKGPLGYAMIKKLKVYAEAEHPHEAQQPKALEI</sequence>
<accession>B2AH57</accession>
<name>RL13_CUPTR</name>
<comment type="function">
    <text evidence="1">This protein is one of the early assembly proteins of the 50S ribosomal subunit, although it is not seen to bind rRNA by itself. It is important during the early stages of 50S assembly.</text>
</comment>
<comment type="subunit">
    <text evidence="1">Part of the 50S ribosomal subunit.</text>
</comment>
<comment type="similarity">
    <text evidence="1">Belongs to the universal ribosomal protein uL13 family.</text>
</comment>
<reference key="1">
    <citation type="journal article" date="2008" name="Genome Res.">
        <title>Genome sequence of the beta-rhizobium Cupriavidus taiwanensis and comparative genomics of rhizobia.</title>
        <authorList>
            <person name="Amadou C."/>
            <person name="Pascal G."/>
            <person name="Mangenot S."/>
            <person name="Glew M."/>
            <person name="Bontemps C."/>
            <person name="Capela D."/>
            <person name="Carrere S."/>
            <person name="Cruveiller S."/>
            <person name="Dossat C."/>
            <person name="Lajus A."/>
            <person name="Marchetti M."/>
            <person name="Poinsot V."/>
            <person name="Rouy Z."/>
            <person name="Servin B."/>
            <person name="Saad M."/>
            <person name="Schenowitz C."/>
            <person name="Barbe V."/>
            <person name="Batut J."/>
            <person name="Medigue C."/>
            <person name="Masson-Boivin C."/>
        </authorList>
    </citation>
    <scope>NUCLEOTIDE SEQUENCE [LARGE SCALE GENOMIC DNA]</scope>
    <source>
        <strain>DSM 17343 / BCRC 17206 / CCUG 44338 / CIP 107171 / LMG 19424 / R1</strain>
    </source>
</reference>
<proteinExistence type="inferred from homology"/>
<feature type="chain" id="PRO_1000144113" description="Large ribosomal subunit protein uL13">
    <location>
        <begin position="1"/>
        <end position="142"/>
    </location>
</feature>
<dbReference type="EMBL" id="CU633749">
    <property type="protein sequence ID" value="CAP63106.1"/>
    <property type="molecule type" value="Genomic_DNA"/>
</dbReference>
<dbReference type="RefSeq" id="WP_010813907.1">
    <property type="nucleotide sequence ID" value="NC_010528.1"/>
</dbReference>
<dbReference type="SMR" id="B2AH57"/>
<dbReference type="GeneID" id="34310317"/>
<dbReference type="KEGG" id="cti:RALTA_A0438"/>
<dbReference type="eggNOG" id="COG0102">
    <property type="taxonomic scope" value="Bacteria"/>
</dbReference>
<dbReference type="HOGENOM" id="CLU_082184_2_2_4"/>
<dbReference type="BioCyc" id="CTAI977880:RALTA_RS02140-MONOMER"/>
<dbReference type="Proteomes" id="UP000001692">
    <property type="component" value="Chromosome 1"/>
</dbReference>
<dbReference type="GO" id="GO:0022625">
    <property type="term" value="C:cytosolic large ribosomal subunit"/>
    <property type="evidence" value="ECO:0007669"/>
    <property type="project" value="TreeGrafter"/>
</dbReference>
<dbReference type="GO" id="GO:0003729">
    <property type="term" value="F:mRNA binding"/>
    <property type="evidence" value="ECO:0007669"/>
    <property type="project" value="TreeGrafter"/>
</dbReference>
<dbReference type="GO" id="GO:0003735">
    <property type="term" value="F:structural constituent of ribosome"/>
    <property type="evidence" value="ECO:0007669"/>
    <property type="project" value="InterPro"/>
</dbReference>
<dbReference type="GO" id="GO:0017148">
    <property type="term" value="P:negative regulation of translation"/>
    <property type="evidence" value="ECO:0007669"/>
    <property type="project" value="TreeGrafter"/>
</dbReference>
<dbReference type="GO" id="GO:0006412">
    <property type="term" value="P:translation"/>
    <property type="evidence" value="ECO:0007669"/>
    <property type="project" value="UniProtKB-UniRule"/>
</dbReference>
<dbReference type="CDD" id="cd00392">
    <property type="entry name" value="Ribosomal_L13"/>
    <property type="match status" value="1"/>
</dbReference>
<dbReference type="FunFam" id="3.90.1180.10:FF:000001">
    <property type="entry name" value="50S ribosomal protein L13"/>
    <property type="match status" value="1"/>
</dbReference>
<dbReference type="Gene3D" id="3.90.1180.10">
    <property type="entry name" value="Ribosomal protein L13"/>
    <property type="match status" value="1"/>
</dbReference>
<dbReference type="HAMAP" id="MF_01366">
    <property type="entry name" value="Ribosomal_uL13"/>
    <property type="match status" value="1"/>
</dbReference>
<dbReference type="InterPro" id="IPR005822">
    <property type="entry name" value="Ribosomal_uL13"/>
</dbReference>
<dbReference type="InterPro" id="IPR005823">
    <property type="entry name" value="Ribosomal_uL13_bac-type"/>
</dbReference>
<dbReference type="InterPro" id="IPR036899">
    <property type="entry name" value="Ribosomal_uL13_sf"/>
</dbReference>
<dbReference type="NCBIfam" id="TIGR01066">
    <property type="entry name" value="rplM_bact"/>
    <property type="match status" value="1"/>
</dbReference>
<dbReference type="PANTHER" id="PTHR11545:SF2">
    <property type="entry name" value="LARGE RIBOSOMAL SUBUNIT PROTEIN UL13M"/>
    <property type="match status" value="1"/>
</dbReference>
<dbReference type="PANTHER" id="PTHR11545">
    <property type="entry name" value="RIBOSOMAL PROTEIN L13"/>
    <property type="match status" value="1"/>
</dbReference>
<dbReference type="Pfam" id="PF00572">
    <property type="entry name" value="Ribosomal_L13"/>
    <property type="match status" value="1"/>
</dbReference>
<dbReference type="PIRSF" id="PIRSF002181">
    <property type="entry name" value="Ribosomal_L13"/>
    <property type="match status" value="1"/>
</dbReference>
<dbReference type="SUPFAM" id="SSF52161">
    <property type="entry name" value="Ribosomal protein L13"/>
    <property type="match status" value="1"/>
</dbReference>
<gene>
    <name evidence="1" type="primary">rplM</name>
    <name type="ordered locus">RALTA_A0438</name>
</gene>
<organism>
    <name type="scientific">Cupriavidus taiwanensis (strain DSM 17343 / BCRC 17206 / CCUG 44338 / CIP 107171 / LMG 19424 / R1)</name>
    <name type="common">Ralstonia taiwanensis (strain LMG 19424)</name>
    <dbReference type="NCBI Taxonomy" id="977880"/>
    <lineage>
        <taxon>Bacteria</taxon>
        <taxon>Pseudomonadati</taxon>
        <taxon>Pseudomonadota</taxon>
        <taxon>Betaproteobacteria</taxon>
        <taxon>Burkholderiales</taxon>
        <taxon>Burkholderiaceae</taxon>
        <taxon>Cupriavidus</taxon>
    </lineage>
</organism>